<organism>
    <name type="scientific">Zymomonas mobilis subsp. mobilis (strain ATCC 31821 / ZM4 / CP4)</name>
    <dbReference type="NCBI Taxonomy" id="264203"/>
    <lineage>
        <taxon>Bacteria</taxon>
        <taxon>Pseudomonadati</taxon>
        <taxon>Pseudomonadota</taxon>
        <taxon>Alphaproteobacteria</taxon>
        <taxon>Sphingomonadales</taxon>
        <taxon>Zymomonadaceae</taxon>
        <taxon>Zymomonas</taxon>
    </lineage>
</organism>
<feature type="chain" id="PRO_0000235433" description="Holliday junction branch migration complex subunit RuvB">
    <location>
        <begin position="1"/>
        <end position="347"/>
    </location>
</feature>
<feature type="region of interest" description="Large ATPase domain (RuvB-L)" evidence="1">
    <location>
        <begin position="1"/>
        <end position="181"/>
    </location>
</feature>
<feature type="region of interest" description="Small ATPAse domain (RuvB-S)" evidence="1">
    <location>
        <begin position="182"/>
        <end position="252"/>
    </location>
</feature>
<feature type="region of interest" description="Head domain (RuvB-H)" evidence="1">
    <location>
        <begin position="255"/>
        <end position="347"/>
    </location>
</feature>
<feature type="binding site" evidence="1">
    <location>
        <position position="20"/>
    </location>
    <ligand>
        <name>ATP</name>
        <dbReference type="ChEBI" id="CHEBI:30616"/>
    </ligand>
</feature>
<feature type="binding site" evidence="1">
    <location>
        <position position="21"/>
    </location>
    <ligand>
        <name>ATP</name>
        <dbReference type="ChEBI" id="CHEBI:30616"/>
    </ligand>
</feature>
<feature type="binding site" evidence="1">
    <location>
        <position position="62"/>
    </location>
    <ligand>
        <name>ATP</name>
        <dbReference type="ChEBI" id="CHEBI:30616"/>
    </ligand>
</feature>
<feature type="binding site" evidence="1">
    <location>
        <position position="65"/>
    </location>
    <ligand>
        <name>ATP</name>
        <dbReference type="ChEBI" id="CHEBI:30616"/>
    </ligand>
</feature>
<feature type="binding site" evidence="1">
    <location>
        <position position="66"/>
    </location>
    <ligand>
        <name>ATP</name>
        <dbReference type="ChEBI" id="CHEBI:30616"/>
    </ligand>
</feature>
<feature type="binding site" evidence="1">
    <location>
        <position position="66"/>
    </location>
    <ligand>
        <name>Mg(2+)</name>
        <dbReference type="ChEBI" id="CHEBI:18420"/>
    </ligand>
</feature>
<feature type="binding site" evidence="1">
    <location>
        <position position="67"/>
    </location>
    <ligand>
        <name>ATP</name>
        <dbReference type="ChEBI" id="CHEBI:30616"/>
    </ligand>
</feature>
<feature type="binding site" evidence="1">
    <location>
        <position position="171"/>
    </location>
    <ligand>
        <name>ATP</name>
        <dbReference type="ChEBI" id="CHEBI:30616"/>
    </ligand>
</feature>
<feature type="binding site" evidence="1">
    <location>
        <position position="181"/>
    </location>
    <ligand>
        <name>ATP</name>
        <dbReference type="ChEBI" id="CHEBI:30616"/>
    </ligand>
</feature>
<feature type="binding site" evidence="1">
    <location>
        <position position="218"/>
    </location>
    <ligand>
        <name>ATP</name>
        <dbReference type="ChEBI" id="CHEBI:30616"/>
    </ligand>
</feature>
<feature type="binding site" evidence="1">
    <location>
        <position position="291"/>
    </location>
    <ligand>
        <name>DNA</name>
        <dbReference type="ChEBI" id="CHEBI:16991"/>
    </ligand>
</feature>
<feature type="binding site" evidence="1">
    <location>
        <position position="310"/>
    </location>
    <ligand>
        <name>DNA</name>
        <dbReference type="ChEBI" id="CHEBI:16991"/>
    </ligand>
</feature>
<feature type="binding site" evidence="1">
    <location>
        <position position="315"/>
    </location>
    <ligand>
        <name>DNA</name>
        <dbReference type="ChEBI" id="CHEBI:16991"/>
    </ligand>
</feature>
<comment type="function">
    <text evidence="1">The RuvA-RuvB-RuvC complex processes Holliday junction (HJ) DNA during genetic recombination and DNA repair, while the RuvA-RuvB complex plays an important role in the rescue of blocked DNA replication forks via replication fork reversal (RFR). RuvA specifically binds to HJ cruciform DNA, conferring on it an open structure. The RuvB hexamer acts as an ATP-dependent pump, pulling dsDNA into and through the RuvAB complex. RuvB forms 2 homohexamers on either side of HJ DNA bound by 1 or 2 RuvA tetramers; 4 subunits per hexamer contact DNA at a time. Coordinated motions by a converter formed by DNA-disengaged RuvB subunits stimulates ATP hydrolysis and nucleotide exchange. Immobilization of the converter enables RuvB to convert the ATP-contained energy into a lever motion, pulling 2 nucleotides of DNA out of the RuvA tetramer per ATP hydrolyzed, thus driving DNA branch migration. The RuvB motors rotate together with the DNA substrate, which together with the progressing nucleotide cycle form the mechanistic basis for DNA recombination by continuous HJ branch migration. Branch migration allows RuvC to scan DNA until it finds its consensus sequence, where it cleaves and resolves cruciform DNA.</text>
</comment>
<comment type="catalytic activity">
    <reaction evidence="1">
        <text>ATP + H2O = ADP + phosphate + H(+)</text>
        <dbReference type="Rhea" id="RHEA:13065"/>
        <dbReference type="ChEBI" id="CHEBI:15377"/>
        <dbReference type="ChEBI" id="CHEBI:15378"/>
        <dbReference type="ChEBI" id="CHEBI:30616"/>
        <dbReference type="ChEBI" id="CHEBI:43474"/>
        <dbReference type="ChEBI" id="CHEBI:456216"/>
    </reaction>
</comment>
<comment type="subunit">
    <text evidence="1">Homohexamer. Forms an RuvA(8)-RuvB(12)-Holliday junction (HJ) complex. HJ DNA is sandwiched between 2 RuvA tetramers; dsDNA enters through RuvA and exits via RuvB. An RuvB hexamer assembles on each DNA strand where it exits the tetramer. Each RuvB hexamer is contacted by two RuvA subunits (via domain III) on 2 adjacent RuvB subunits; this complex drives branch migration. In the full resolvosome a probable DNA-RuvA(4)-RuvB(12)-RuvC(2) complex forms which resolves the HJ.</text>
</comment>
<comment type="subcellular location">
    <subcellularLocation>
        <location evidence="1">Cytoplasm</location>
    </subcellularLocation>
</comment>
<comment type="domain">
    <text evidence="1">Has 3 domains, the large (RuvB-L) and small ATPase (RuvB-S) domains and the C-terminal head (RuvB-H) domain. The head domain binds DNA, while the ATPase domains jointly bind ATP, ADP or are empty depending on the state of the subunit in the translocation cycle. During a single DNA translocation step the structure of each domain remains the same, but their relative positions change.</text>
</comment>
<comment type="similarity">
    <text evidence="1">Belongs to the RuvB family.</text>
</comment>
<name>RUVB_ZYMMO</name>
<accession>Q5NR72</accession>
<protein>
    <recommendedName>
        <fullName evidence="1">Holliday junction branch migration complex subunit RuvB</fullName>
        <ecNumber evidence="1">3.6.4.-</ecNumber>
    </recommendedName>
</protein>
<reference key="1">
    <citation type="journal article" date="2005" name="Nat. Biotechnol.">
        <title>The genome sequence of the ethanologenic bacterium Zymomonas mobilis ZM4.</title>
        <authorList>
            <person name="Seo J.-S."/>
            <person name="Chong H."/>
            <person name="Park H.S."/>
            <person name="Yoon K.-O."/>
            <person name="Jung C."/>
            <person name="Kim J.J."/>
            <person name="Hong J.H."/>
            <person name="Kim H."/>
            <person name="Kim J.-H."/>
            <person name="Kil J.-I."/>
            <person name="Park C.J."/>
            <person name="Oh H.-M."/>
            <person name="Lee J.-S."/>
            <person name="Jin S.-J."/>
            <person name="Um H.-W."/>
            <person name="Lee H.-J."/>
            <person name="Oh S.-J."/>
            <person name="Kim J.Y."/>
            <person name="Kang H.L."/>
            <person name="Lee S.Y."/>
            <person name="Lee K.J."/>
            <person name="Kang H.S."/>
        </authorList>
    </citation>
    <scope>NUCLEOTIDE SEQUENCE [LARGE SCALE GENOMIC DNA]</scope>
    <source>
        <strain>ATCC 31821 / ZM4 / CP4</strain>
    </source>
</reference>
<gene>
    <name evidence="1" type="primary">ruvB</name>
    <name type="ordered locus">ZMO0158</name>
</gene>
<dbReference type="EC" id="3.6.4.-" evidence="1"/>
<dbReference type="EMBL" id="AE008692">
    <property type="protein sequence ID" value="AAV88782.1"/>
    <property type="molecule type" value="Genomic_DNA"/>
</dbReference>
<dbReference type="RefSeq" id="WP_011240118.1">
    <property type="nucleotide sequence ID" value="NZ_CP035711.1"/>
</dbReference>
<dbReference type="SMR" id="Q5NR72"/>
<dbReference type="STRING" id="264203.ZMO0158"/>
<dbReference type="KEGG" id="zmo:ZMO0158"/>
<dbReference type="eggNOG" id="COG2255">
    <property type="taxonomic scope" value="Bacteria"/>
</dbReference>
<dbReference type="HOGENOM" id="CLU_055599_1_0_5"/>
<dbReference type="Proteomes" id="UP000001173">
    <property type="component" value="Chromosome"/>
</dbReference>
<dbReference type="GO" id="GO:0005737">
    <property type="term" value="C:cytoplasm"/>
    <property type="evidence" value="ECO:0007669"/>
    <property type="project" value="UniProtKB-SubCell"/>
</dbReference>
<dbReference type="GO" id="GO:0048476">
    <property type="term" value="C:Holliday junction resolvase complex"/>
    <property type="evidence" value="ECO:0007669"/>
    <property type="project" value="UniProtKB-UniRule"/>
</dbReference>
<dbReference type="GO" id="GO:0005524">
    <property type="term" value="F:ATP binding"/>
    <property type="evidence" value="ECO:0007669"/>
    <property type="project" value="UniProtKB-UniRule"/>
</dbReference>
<dbReference type="GO" id="GO:0016887">
    <property type="term" value="F:ATP hydrolysis activity"/>
    <property type="evidence" value="ECO:0007669"/>
    <property type="project" value="InterPro"/>
</dbReference>
<dbReference type="GO" id="GO:0000400">
    <property type="term" value="F:four-way junction DNA binding"/>
    <property type="evidence" value="ECO:0007669"/>
    <property type="project" value="UniProtKB-UniRule"/>
</dbReference>
<dbReference type="GO" id="GO:0009378">
    <property type="term" value="F:four-way junction helicase activity"/>
    <property type="evidence" value="ECO:0007669"/>
    <property type="project" value="InterPro"/>
</dbReference>
<dbReference type="GO" id="GO:0006310">
    <property type="term" value="P:DNA recombination"/>
    <property type="evidence" value="ECO:0007669"/>
    <property type="project" value="UniProtKB-UniRule"/>
</dbReference>
<dbReference type="GO" id="GO:0006281">
    <property type="term" value="P:DNA repair"/>
    <property type="evidence" value="ECO:0007669"/>
    <property type="project" value="UniProtKB-UniRule"/>
</dbReference>
<dbReference type="CDD" id="cd00009">
    <property type="entry name" value="AAA"/>
    <property type="match status" value="1"/>
</dbReference>
<dbReference type="Gene3D" id="1.10.8.60">
    <property type="match status" value="1"/>
</dbReference>
<dbReference type="Gene3D" id="3.40.50.300">
    <property type="entry name" value="P-loop containing nucleotide triphosphate hydrolases"/>
    <property type="match status" value="1"/>
</dbReference>
<dbReference type="Gene3D" id="1.10.10.10">
    <property type="entry name" value="Winged helix-like DNA-binding domain superfamily/Winged helix DNA-binding domain"/>
    <property type="match status" value="1"/>
</dbReference>
<dbReference type="HAMAP" id="MF_00016">
    <property type="entry name" value="DNA_HJ_migration_RuvB"/>
    <property type="match status" value="1"/>
</dbReference>
<dbReference type="InterPro" id="IPR003593">
    <property type="entry name" value="AAA+_ATPase"/>
</dbReference>
<dbReference type="InterPro" id="IPR041445">
    <property type="entry name" value="AAA_lid_4"/>
</dbReference>
<dbReference type="InterPro" id="IPR004605">
    <property type="entry name" value="DNA_helicase_Holl-junc_RuvB"/>
</dbReference>
<dbReference type="InterPro" id="IPR027417">
    <property type="entry name" value="P-loop_NTPase"/>
</dbReference>
<dbReference type="InterPro" id="IPR008824">
    <property type="entry name" value="RuvB-like_N"/>
</dbReference>
<dbReference type="InterPro" id="IPR008823">
    <property type="entry name" value="RuvB_C"/>
</dbReference>
<dbReference type="InterPro" id="IPR036388">
    <property type="entry name" value="WH-like_DNA-bd_sf"/>
</dbReference>
<dbReference type="InterPro" id="IPR036390">
    <property type="entry name" value="WH_DNA-bd_sf"/>
</dbReference>
<dbReference type="NCBIfam" id="NF000868">
    <property type="entry name" value="PRK00080.1"/>
    <property type="match status" value="1"/>
</dbReference>
<dbReference type="NCBIfam" id="TIGR00635">
    <property type="entry name" value="ruvB"/>
    <property type="match status" value="1"/>
</dbReference>
<dbReference type="PANTHER" id="PTHR42848">
    <property type="match status" value="1"/>
</dbReference>
<dbReference type="PANTHER" id="PTHR42848:SF1">
    <property type="entry name" value="HOLLIDAY JUNCTION BRANCH MIGRATION COMPLEX SUBUNIT RUVB"/>
    <property type="match status" value="1"/>
</dbReference>
<dbReference type="Pfam" id="PF17864">
    <property type="entry name" value="AAA_lid_4"/>
    <property type="match status" value="1"/>
</dbReference>
<dbReference type="Pfam" id="PF05491">
    <property type="entry name" value="RuvB_C"/>
    <property type="match status" value="1"/>
</dbReference>
<dbReference type="Pfam" id="PF05496">
    <property type="entry name" value="RuvB_N"/>
    <property type="match status" value="1"/>
</dbReference>
<dbReference type="SMART" id="SM00382">
    <property type="entry name" value="AAA"/>
    <property type="match status" value="1"/>
</dbReference>
<dbReference type="SUPFAM" id="SSF52540">
    <property type="entry name" value="P-loop containing nucleoside triphosphate hydrolases"/>
    <property type="match status" value="1"/>
</dbReference>
<dbReference type="SUPFAM" id="SSF46785">
    <property type="entry name" value="Winged helix' DNA-binding domain"/>
    <property type="match status" value="1"/>
</dbReference>
<sequence>MTRNSLLNPEAENADPDQALRPRSLDEFIGQQAARENIRVFIEAAKKRQESLDHVLFFGPPGLGKTTLAQIIAREMGVGFRATSGPVIVKSGDLAALLTNLEDGDVLFIDEIHRLQPVVEEVLYPAMEDRALDLMIGEGPSARSVRIDLPHFTLVGATTRQGLLSTPLRDRFGIPVRLQFYSIEELRQVITRAARLLGMEIAPEGAEEIAKRSRGTPRIAGRLLRRVRDFADVAGSKIVDRFIADEALNRLEVDKLGLDLMDRRYLMMIADIYKGGPVGLDTLAAGLSEPRDTVEEVIEPYLIQLGLVARTARGRQLNGLAWRHLGLTDPREAEGKHSEIKNQPGLL</sequence>
<keyword id="KW-0067">ATP-binding</keyword>
<keyword id="KW-0963">Cytoplasm</keyword>
<keyword id="KW-0227">DNA damage</keyword>
<keyword id="KW-0233">DNA recombination</keyword>
<keyword id="KW-0234">DNA repair</keyword>
<keyword id="KW-0238">DNA-binding</keyword>
<keyword id="KW-0378">Hydrolase</keyword>
<keyword id="KW-0547">Nucleotide-binding</keyword>
<keyword id="KW-1185">Reference proteome</keyword>
<evidence type="ECO:0000255" key="1">
    <source>
        <dbReference type="HAMAP-Rule" id="MF_00016"/>
    </source>
</evidence>
<proteinExistence type="inferred from homology"/>